<accession>Q7NLB5</accession>
<organism>
    <name type="scientific">Gloeobacter violaceus (strain ATCC 29082 / PCC 7421)</name>
    <dbReference type="NCBI Taxonomy" id="251221"/>
    <lineage>
        <taxon>Bacteria</taxon>
        <taxon>Bacillati</taxon>
        <taxon>Cyanobacteriota</taxon>
        <taxon>Cyanophyceae</taxon>
        <taxon>Gloeobacterales</taxon>
        <taxon>Gloeobacteraceae</taxon>
        <taxon>Gloeobacter</taxon>
    </lineage>
</organism>
<proteinExistence type="inferred from homology"/>
<dbReference type="EC" id="3.5.4.19" evidence="1"/>
<dbReference type="EC" id="3.6.1.31" evidence="1"/>
<dbReference type="EMBL" id="BA000045">
    <property type="protein sequence ID" value="BAC89152.1"/>
    <property type="molecule type" value="Genomic_DNA"/>
</dbReference>
<dbReference type="RefSeq" id="NP_924157.1">
    <property type="nucleotide sequence ID" value="NC_005125.1"/>
</dbReference>
<dbReference type="RefSeq" id="WP_011141211.1">
    <property type="nucleotide sequence ID" value="NC_005125.1"/>
</dbReference>
<dbReference type="SMR" id="Q7NLB5"/>
<dbReference type="STRING" id="251221.gene:10758690"/>
<dbReference type="EnsemblBacteria" id="BAC89152">
    <property type="protein sequence ID" value="BAC89152"/>
    <property type="gene ID" value="BAC89152"/>
</dbReference>
<dbReference type="KEGG" id="gvi:glr1211"/>
<dbReference type="PATRIC" id="fig|251221.4.peg.1235"/>
<dbReference type="eggNOG" id="COG0139">
    <property type="taxonomic scope" value="Bacteria"/>
</dbReference>
<dbReference type="eggNOG" id="COG0140">
    <property type="taxonomic scope" value="Bacteria"/>
</dbReference>
<dbReference type="HOGENOM" id="CLU_048577_3_1_3"/>
<dbReference type="InParanoid" id="Q7NLB5"/>
<dbReference type="OrthoDB" id="9795769at2"/>
<dbReference type="PhylomeDB" id="Q7NLB5"/>
<dbReference type="UniPathway" id="UPA00031">
    <property type="reaction ID" value="UER00007"/>
</dbReference>
<dbReference type="UniPathway" id="UPA00031">
    <property type="reaction ID" value="UER00008"/>
</dbReference>
<dbReference type="Proteomes" id="UP000000557">
    <property type="component" value="Chromosome"/>
</dbReference>
<dbReference type="GO" id="GO:0005737">
    <property type="term" value="C:cytoplasm"/>
    <property type="evidence" value="ECO:0007669"/>
    <property type="project" value="UniProtKB-SubCell"/>
</dbReference>
<dbReference type="GO" id="GO:0005524">
    <property type="term" value="F:ATP binding"/>
    <property type="evidence" value="ECO:0007669"/>
    <property type="project" value="UniProtKB-KW"/>
</dbReference>
<dbReference type="GO" id="GO:0004635">
    <property type="term" value="F:phosphoribosyl-AMP cyclohydrolase activity"/>
    <property type="evidence" value="ECO:0007669"/>
    <property type="project" value="UniProtKB-UniRule"/>
</dbReference>
<dbReference type="GO" id="GO:0004636">
    <property type="term" value="F:phosphoribosyl-ATP diphosphatase activity"/>
    <property type="evidence" value="ECO:0007669"/>
    <property type="project" value="UniProtKB-UniRule"/>
</dbReference>
<dbReference type="GO" id="GO:0000105">
    <property type="term" value="P:L-histidine biosynthetic process"/>
    <property type="evidence" value="ECO:0007669"/>
    <property type="project" value="UniProtKB-UniRule"/>
</dbReference>
<dbReference type="CDD" id="cd11534">
    <property type="entry name" value="NTP-PPase_HisIE_like"/>
    <property type="match status" value="1"/>
</dbReference>
<dbReference type="FunFam" id="3.10.20.810:FF:000001">
    <property type="entry name" value="Histidine biosynthesis bifunctional protein HisIE"/>
    <property type="match status" value="1"/>
</dbReference>
<dbReference type="Gene3D" id="1.10.287.1080">
    <property type="entry name" value="MazG-like"/>
    <property type="match status" value="1"/>
</dbReference>
<dbReference type="Gene3D" id="3.10.20.810">
    <property type="entry name" value="Phosphoribosyl-AMP cyclohydrolase"/>
    <property type="match status" value="1"/>
</dbReference>
<dbReference type="HAMAP" id="MF_01020">
    <property type="entry name" value="HisE"/>
    <property type="match status" value="1"/>
</dbReference>
<dbReference type="HAMAP" id="MF_01021">
    <property type="entry name" value="HisI"/>
    <property type="match status" value="1"/>
</dbReference>
<dbReference type="HAMAP" id="MF_01019">
    <property type="entry name" value="HisIE"/>
    <property type="match status" value="1"/>
</dbReference>
<dbReference type="InterPro" id="IPR023019">
    <property type="entry name" value="His_synth_HisIE"/>
</dbReference>
<dbReference type="InterPro" id="IPR008179">
    <property type="entry name" value="HisE"/>
</dbReference>
<dbReference type="InterPro" id="IPR026660">
    <property type="entry name" value="PRA-CH"/>
</dbReference>
<dbReference type="InterPro" id="IPR021130">
    <property type="entry name" value="PRib-ATP_PPHydrolase-like"/>
</dbReference>
<dbReference type="InterPro" id="IPR002496">
    <property type="entry name" value="PRib_AMP_CycHydrolase_dom"/>
</dbReference>
<dbReference type="InterPro" id="IPR038019">
    <property type="entry name" value="PRib_AMP_CycHydrolase_sf"/>
</dbReference>
<dbReference type="NCBIfam" id="TIGR03188">
    <property type="entry name" value="histidine_hisI"/>
    <property type="match status" value="1"/>
</dbReference>
<dbReference type="NCBIfam" id="NF000768">
    <property type="entry name" value="PRK00051.1"/>
    <property type="match status" value="1"/>
</dbReference>
<dbReference type="NCBIfam" id="NF002747">
    <property type="entry name" value="PRK02759.1"/>
    <property type="match status" value="1"/>
</dbReference>
<dbReference type="PANTHER" id="PTHR42945">
    <property type="entry name" value="HISTIDINE BIOSYNTHESIS BIFUNCTIONAL PROTEIN"/>
    <property type="match status" value="1"/>
</dbReference>
<dbReference type="PANTHER" id="PTHR42945:SF1">
    <property type="entry name" value="HISTIDINE BIOSYNTHESIS BIFUNCTIONAL PROTEIN HIS7"/>
    <property type="match status" value="1"/>
</dbReference>
<dbReference type="Pfam" id="PF01502">
    <property type="entry name" value="PRA-CH"/>
    <property type="match status" value="1"/>
</dbReference>
<dbReference type="Pfam" id="PF01503">
    <property type="entry name" value="PRA-PH"/>
    <property type="match status" value="1"/>
</dbReference>
<dbReference type="SUPFAM" id="SSF101386">
    <property type="entry name" value="all-alpha NTP pyrophosphatases"/>
    <property type="match status" value="1"/>
</dbReference>
<dbReference type="SUPFAM" id="SSF141734">
    <property type="entry name" value="HisI-like"/>
    <property type="match status" value="1"/>
</dbReference>
<gene>
    <name evidence="1" type="primary">hisI</name>
    <name evidence="1" type="synonym">hisIE</name>
    <name type="ordered locus">glr1211</name>
</gene>
<name>HIS2_GLOVI</name>
<protein>
    <recommendedName>
        <fullName evidence="1">Histidine biosynthesis bifunctional protein HisIE</fullName>
    </recommendedName>
    <domain>
        <recommendedName>
            <fullName evidence="1">Phosphoribosyl-AMP cyclohydrolase</fullName>
            <shortName evidence="1">PRA-CH</shortName>
            <ecNumber evidence="1">3.5.4.19</ecNumber>
        </recommendedName>
    </domain>
    <domain>
        <recommendedName>
            <fullName evidence="1">Phosphoribosyl-ATP pyrophosphatase</fullName>
            <shortName evidence="1">PRA-PH</shortName>
            <ecNumber evidence="1">3.6.1.31</ecNumber>
        </recommendedName>
    </domain>
</protein>
<comment type="catalytic activity">
    <reaction evidence="1">
        <text>1-(5-phospho-beta-D-ribosyl)-ATP + H2O = 1-(5-phospho-beta-D-ribosyl)-5'-AMP + diphosphate + H(+)</text>
        <dbReference type="Rhea" id="RHEA:22828"/>
        <dbReference type="ChEBI" id="CHEBI:15377"/>
        <dbReference type="ChEBI" id="CHEBI:15378"/>
        <dbReference type="ChEBI" id="CHEBI:33019"/>
        <dbReference type="ChEBI" id="CHEBI:59457"/>
        <dbReference type="ChEBI" id="CHEBI:73183"/>
        <dbReference type="EC" id="3.6.1.31"/>
    </reaction>
</comment>
<comment type="catalytic activity">
    <reaction evidence="1">
        <text>1-(5-phospho-beta-D-ribosyl)-5'-AMP + H2O = 1-(5-phospho-beta-D-ribosyl)-5-[(5-phospho-beta-D-ribosylamino)methylideneamino]imidazole-4-carboxamide</text>
        <dbReference type="Rhea" id="RHEA:20049"/>
        <dbReference type="ChEBI" id="CHEBI:15377"/>
        <dbReference type="ChEBI" id="CHEBI:58435"/>
        <dbReference type="ChEBI" id="CHEBI:59457"/>
        <dbReference type="EC" id="3.5.4.19"/>
    </reaction>
</comment>
<comment type="pathway">
    <text evidence="1">Amino-acid biosynthesis; L-histidine biosynthesis; L-histidine from 5-phospho-alpha-D-ribose 1-diphosphate: step 2/9.</text>
</comment>
<comment type="pathway">
    <text evidence="1">Amino-acid biosynthesis; L-histidine biosynthesis; L-histidine from 5-phospho-alpha-D-ribose 1-diphosphate: step 3/9.</text>
</comment>
<comment type="subcellular location">
    <subcellularLocation>
        <location evidence="1">Cytoplasm</location>
    </subcellularLocation>
</comment>
<comment type="similarity">
    <text evidence="1">In the N-terminal section; belongs to the PRA-CH family.</text>
</comment>
<comment type="similarity">
    <text evidence="1">In the C-terminal section; belongs to the PRA-PH family.</text>
</comment>
<keyword id="KW-0028">Amino-acid biosynthesis</keyword>
<keyword id="KW-0067">ATP-binding</keyword>
<keyword id="KW-0963">Cytoplasm</keyword>
<keyword id="KW-0368">Histidine biosynthesis</keyword>
<keyword id="KW-0378">Hydrolase</keyword>
<keyword id="KW-0511">Multifunctional enzyme</keyword>
<keyword id="KW-0547">Nucleotide-binding</keyword>
<keyword id="KW-1185">Reference proteome</keyword>
<sequence>MAPHQFKSKGAPTLVHVREAARFDRDGLIPAVVQDVLDGTVLMVAWMNREALERTLETGESWFWSRSRQELWHKGATSGHRQKIKALRYDCDSDVLLLTVEQQGDIACHLGERSCFHRDEAGDYDLPPADTLSQVFRVVEERKAHPHPDSYTSRLLEAGSNKILKKIGEEATEVVMAAKDGERVAEEVADLWYHTLVLLAHADVDILDVYRALQQRRR</sequence>
<evidence type="ECO:0000255" key="1">
    <source>
        <dbReference type="HAMAP-Rule" id="MF_01019"/>
    </source>
</evidence>
<reference key="1">
    <citation type="journal article" date="2003" name="DNA Res.">
        <title>Complete genome structure of Gloeobacter violaceus PCC 7421, a cyanobacterium that lacks thylakoids.</title>
        <authorList>
            <person name="Nakamura Y."/>
            <person name="Kaneko T."/>
            <person name="Sato S."/>
            <person name="Mimuro M."/>
            <person name="Miyashita H."/>
            <person name="Tsuchiya T."/>
            <person name="Sasamoto S."/>
            <person name="Watanabe A."/>
            <person name="Kawashima K."/>
            <person name="Kishida Y."/>
            <person name="Kiyokawa C."/>
            <person name="Kohara M."/>
            <person name="Matsumoto M."/>
            <person name="Matsuno A."/>
            <person name="Nakazaki N."/>
            <person name="Shimpo S."/>
            <person name="Takeuchi C."/>
            <person name="Yamada M."/>
            <person name="Tabata S."/>
        </authorList>
    </citation>
    <scope>NUCLEOTIDE SEQUENCE [LARGE SCALE GENOMIC DNA]</scope>
    <source>
        <strain>ATCC 29082 / PCC 7421</strain>
    </source>
</reference>
<feature type="chain" id="PRO_0000136414" description="Histidine biosynthesis bifunctional protein HisIE">
    <location>
        <begin position="1"/>
        <end position="218"/>
    </location>
</feature>
<feature type="region of interest" description="Phosphoribosyl-AMP cyclohydrolase">
    <location>
        <begin position="1"/>
        <end position="131"/>
    </location>
</feature>
<feature type="region of interest" description="Phosphoribosyl-ATP pyrophosphohydrolase">
    <location>
        <begin position="132"/>
        <end position="218"/>
    </location>
</feature>